<protein>
    <recommendedName>
        <fullName evidence="7">Malate synthase 2</fullName>
        <ecNumber evidence="1">2.3.3.9</ecNumber>
    </recommendedName>
    <alternativeName>
        <fullName evidence="6">Degradation of allantoin protein 7</fullName>
    </alternativeName>
</protein>
<gene>
    <name evidence="6" type="primary">DAL7</name>
    <name evidence="7" type="synonym">MLS2</name>
    <name type="ordered locus">YIR031C</name>
</gene>
<feature type="chain" id="PRO_0000166865" description="Malate synthase 2">
    <location>
        <begin position="1"/>
        <end position="554"/>
    </location>
</feature>
<feature type="short sequence motif" description="SKL peroxisome targeting motif" evidence="9">
    <location>
        <begin position="552"/>
        <end position="554"/>
    </location>
</feature>
<feature type="active site" description="Proton acceptor" evidence="1">
    <location>
        <position position="177"/>
    </location>
</feature>
<feature type="active site" description="Proton donor" evidence="1">
    <location>
        <position position="457"/>
    </location>
</feature>
<feature type="sequence conflict" description="In Ref. 1; AAA50351 and 2; no nucleotide entry." evidence="8" ref="1 2">
    <original>A</original>
    <variation>D</variation>
    <location>
        <position position="115"/>
    </location>
</feature>
<feature type="sequence conflict" description="In Ref. 1; AAA50351 and 2; no nucleotide entry." evidence="8" ref="1 2">
    <original>D</original>
    <variation>G</variation>
    <location>
        <position position="166"/>
    </location>
</feature>
<feature type="sequence conflict" description="In Ref. 1; AAA50351 and 2; no nucleotide entry." evidence="8" ref="1 2">
    <original>P</original>
    <variation>N</variation>
    <location>
        <position position="302"/>
    </location>
</feature>
<keyword id="KW-0329">Glyoxylate bypass</keyword>
<keyword id="KW-0576">Peroxisome</keyword>
<keyword id="KW-0659">Purine metabolism</keyword>
<keyword id="KW-1185">Reference proteome</keyword>
<keyword id="KW-0808">Transferase</keyword>
<keyword id="KW-0816">Tricarboxylic acid cycle</keyword>
<evidence type="ECO:0000250" key="1">
    <source>
        <dbReference type="UniProtKB" id="Q9LZC3"/>
    </source>
</evidence>
<evidence type="ECO:0000269" key="2">
    <source>
    </source>
</evidence>
<evidence type="ECO:0000269" key="3">
    <source>
    </source>
</evidence>
<evidence type="ECO:0000269" key="4">
    <source>
    </source>
</evidence>
<evidence type="ECO:0000269" key="5">
    <source>
    </source>
</evidence>
<evidence type="ECO:0000303" key="6">
    <source>
    </source>
</evidence>
<evidence type="ECO:0000303" key="7">
    <source>
    </source>
</evidence>
<evidence type="ECO:0000305" key="8"/>
<evidence type="ECO:0000305" key="9">
    <source>
    </source>
</evidence>
<dbReference type="EC" id="2.3.3.9" evidence="1"/>
<dbReference type="EMBL" id="M28124">
    <property type="protein sequence ID" value="AAA50351.1"/>
    <property type="molecule type" value="Genomic_DNA"/>
</dbReference>
<dbReference type="EMBL" id="Z38061">
    <property type="protein sequence ID" value="CAA86191.1"/>
    <property type="molecule type" value="Genomic_DNA"/>
</dbReference>
<dbReference type="EMBL" id="BK006942">
    <property type="protein sequence ID" value="DAA08578.1"/>
    <property type="molecule type" value="Genomic_DNA"/>
</dbReference>
<dbReference type="PIR" id="S48493">
    <property type="entry name" value="S48493"/>
</dbReference>
<dbReference type="RefSeq" id="NP_012297.3">
    <property type="nucleotide sequence ID" value="NM_001179553.3"/>
</dbReference>
<dbReference type="SMR" id="P21826"/>
<dbReference type="BioGRID" id="35022">
    <property type="interactions" value="43"/>
</dbReference>
<dbReference type="DIP" id="DIP-6744N"/>
<dbReference type="FunCoup" id="P21826">
    <property type="interactions" value="683"/>
</dbReference>
<dbReference type="IntAct" id="P21826">
    <property type="interactions" value="1"/>
</dbReference>
<dbReference type="STRING" id="4932.YIR031C"/>
<dbReference type="PaxDb" id="4932-YIR031C"/>
<dbReference type="PeptideAtlas" id="P21826"/>
<dbReference type="EnsemblFungi" id="YIR031C_mRNA">
    <property type="protein sequence ID" value="YIR031C"/>
    <property type="gene ID" value="YIR031C"/>
</dbReference>
<dbReference type="GeneID" id="854849"/>
<dbReference type="KEGG" id="sce:YIR031C"/>
<dbReference type="AGR" id="SGD:S000001470"/>
<dbReference type="SGD" id="S000001470">
    <property type="gene designation" value="DAL7"/>
</dbReference>
<dbReference type="VEuPathDB" id="FungiDB:YIR031C"/>
<dbReference type="eggNOG" id="KOG1261">
    <property type="taxonomic scope" value="Eukaryota"/>
</dbReference>
<dbReference type="GeneTree" id="ENSGT00940000174673"/>
<dbReference type="HOGENOM" id="CLU_018928_3_0_1"/>
<dbReference type="InParanoid" id="P21826"/>
<dbReference type="OMA" id="WHLPERH"/>
<dbReference type="OrthoDB" id="186072at2759"/>
<dbReference type="BioCyc" id="MetaCyc:YIR031C-MONOMER"/>
<dbReference type="BioCyc" id="YEAST:YIR031C-MONOMER"/>
<dbReference type="BioGRID-ORCS" id="854849">
    <property type="hits" value="3 hits in 10 CRISPR screens"/>
</dbReference>
<dbReference type="PRO" id="PR:P21826"/>
<dbReference type="Proteomes" id="UP000002311">
    <property type="component" value="Chromosome IX"/>
</dbReference>
<dbReference type="RNAct" id="P21826">
    <property type="molecule type" value="protein"/>
</dbReference>
<dbReference type="GO" id="GO:0005737">
    <property type="term" value="C:cytoplasm"/>
    <property type="evidence" value="ECO:0000318"/>
    <property type="project" value="GO_Central"/>
</dbReference>
<dbReference type="GO" id="GO:0005829">
    <property type="term" value="C:cytosol"/>
    <property type="evidence" value="ECO:0007005"/>
    <property type="project" value="SGD"/>
</dbReference>
<dbReference type="GO" id="GO:0005782">
    <property type="term" value="C:peroxisomal matrix"/>
    <property type="evidence" value="ECO:0000318"/>
    <property type="project" value="GO_Central"/>
</dbReference>
<dbReference type="GO" id="GO:0005777">
    <property type="term" value="C:peroxisome"/>
    <property type="evidence" value="ECO:0000314"/>
    <property type="project" value="SGD"/>
</dbReference>
<dbReference type="GO" id="GO:0004474">
    <property type="term" value="F:malate synthase activity"/>
    <property type="evidence" value="ECO:0000314"/>
    <property type="project" value="SGD"/>
</dbReference>
<dbReference type="GO" id="GO:0000256">
    <property type="term" value="P:allantoin catabolic process"/>
    <property type="evidence" value="ECO:0000314"/>
    <property type="project" value="SGD"/>
</dbReference>
<dbReference type="GO" id="GO:0006097">
    <property type="term" value="P:glyoxylate cycle"/>
    <property type="evidence" value="ECO:0000318"/>
    <property type="project" value="GO_Central"/>
</dbReference>
<dbReference type="GO" id="GO:0006144">
    <property type="term" value="P:purine nucleobase metabolic process"/>
    <property type="evidence" value="ECO:0007669"/>
    <property type="project" value="UniProtKB-KW"/>
</dbReference>
<dbReference type="GO" id="GO:0006099">
    <property type="term" value="P:tricarboxylic acid cycle"/>
    <property type="evidence" value="ECO:0007669"/>
    <property type="project" value="UniProtKB-KW"/>
</dbReference>
<dbReference type="CDD" id="cd00727">
    <property type="entry name" value="malate_synt_A"/>
    <property type="match status" value="1"/>
</dbReference>
<dbReference type="FunFam" id="1.20.1220.12:FF:000001">
    <property type="entry name" value="Malate synthase"/>
    <property type="match status" value="1"/>
</dbReference>
<dbReference type="FunFam" id="3.20.20.360:FF:000001">
    <property type="entry name" value="Malate synthase"/>
    <property type="match status" value="1"/>
</dbReference>
<dbReference type="Gene3D" id="3.20.20.360">
    <property type="entry name" value="Malate synthase, domain 3"/>
    <property type="match status" value="1"/>
</dbReference>
<dbReference type="Gene3D" id="1.20.1220.12">
    <property type="entry name" value="Malate synthase, domain III"/>
    <property type="match status" value="1"/>
</dbReference>
<dbReference type="InterPro" id="IPR044856">
    <property type="entry name" value="Malate_synth_C_sf"/>
</dbReference>
<dbReference type="InterPro" id="IPR011076">
    <property type="entry name" value="Malate_synth_sf"/>
</dbReference>
<dbReference type="InterPro" id="IPR006252">
    <property type="entry name" value="Malate_synthA"/>
</dbReference>
<dbReference type="InterPro" id="IPR019830">
    <property type="entry name" value="Malate_synthase_CS"/>
</dbReference>
<dbReference type="InterPro" id="IPR001465">
    <property type="entry name" value="Malate_synthase_TIM"/>
</dbReference>
<dbReference type="InterPro" id="IPR048355">
    <property type="entry name" value="MS_C"/>
</dbReference>
<dbReference type="InterPro" id="IPR048356">
    <property type="entry name" value="MS_N"/>
</dbReference>
<dbReference type="InterPro" id="IPR046363">
    <property type="entry name" value="MS_N_TIM-barrel_dom"/>
</dbReference>
<dbReference type="NCBIfam" id="TIGR01344">
    <property type="entry name" value="malate_syn_A"/>
    <property type="match status" value="1"/>
</dbReference>
<dbReference type="PANTHER" id="PTHR42902">
    <property type="entry name" value="MALATE SYNTHASE"/>
    <property type="match status" value="1"/>
</dbReference>
<dbReference type="PANTHER" id="PTHR42902:SF1">
    <property type="entry name" value="MALATE SYNTHASE 1-RELATED"/>
    <property type="match status" value="1"/>
</dbReference>
<dbReference type="Pfam" id="PF20659">
    <property type="entry name" value="MS_C"/>
    <property type="match status" value="1"/>
</dbReference>
<dbReference type="Pfam" id="PF20656">
    <property type="entry name" value="MS_N"/>
    <property type="match status" value="1"/>
</dbReference>
<dbReference type="Pfam" id="PF01274">
    <property type="entry name" value="MS_TIM-barrel"/>
    <property type="match status" value="1"/>
</dbReference>
<dbReference type="PIRSF" id="PIRSF001363">
    <property type="entry name" value="Malate_synth"/>
    <property type="match status" value="1"/>
</dbReference>
<dbReference type="SUPFAM" id="SSF51645">
    <property type="entry name" value="Malate synthase G"/>
    <property type="match status" value="1"/>
</dbReference>
<dbReference type="PROSITE" id="PS00510">
    <property type="entry name" value="MALATE_SYNTHASE"/>
    <property type="match status" value="1"/>
</dbReference>
<organism>
    <name type="scientific">Saccharomyces cerevisiae (strain ATCC 204508 / S288c)</name>
    <name type="common">Baker's yeast</name>
    <dbReference type="NCBI Taxonomy" id="559292"/>
    <lineage>
        <taxon>Eukaryota</taxon>
        <taxon>Fungi</taxon>
        <taxon>Dikarya</taxon>
        <taxon>Ascomycota</taxon>
        <taxon>Saccharomycotina</taxon>
        <taxon>Saccharomycetes</taxon>
        <taxon>Saccharomycetales</taxon>
        <taxon>Saccharomycetaceae</taxon>
        <taxon>Saccharomyces</taxon>
    </lineage>
</organism>
<reference key="1">
    <citation type="journal article" date="1989" name="Mol. Cell. Biol.">
        <title>The DAL7 promoter consists of multiple elements that cooperatively mediate regulation of the gene's expression.</title>
        <authorList>
            <person name="Yoo H.S."/>
            <person name="Cooper T.G."/>
        </authorList>
    </citation>
    <scope>NUCLEOTIDE SEQUENCE [GENOMIC DNA]</scope>
    <source>
        <strain>RH218</strain>
    </source>
</reference>
<reference key="2">
    <citation type="journal article" date="1993" name="FEBS Lett.">
        <title>Two structural genes are encoding malate synthase isoenzymes in Saccharomyces cerevisiae.</title>
        <authorList>
            <person name="Fernandez E."/>
            <person name="Fernandez M."/>
            <person name="Rodicio R."/>
        </authorList>
    </citation>
    <scope>NUCLEOTIDE SEQUENCE [GENOMIC DNA]</scope>
    <scope>FUNCTION</scope>
    <scope>INDUCTION</scope>
    <scope>DISRUPTION PHENOTYPE</scope>
</reference>
<reference key="3">
    <citation type="journal article" date="1997" name="Nature">
        <title>The nucleotide sequence of Saccharomyces cerevisiae chromosome IX.</title>
        <authorList>
            <person name="Churcher C.M."/>
            <person name="Bowman S."/>
            <person name="Badcock K."/>
            <person name="Bankier A.T."/>
            <person name="Brown D."/>
            <person name="Chillingworth T."/>
            <person name="Connor R."/>
            <person name="Devlin K."/>
            <person name="Gentles S."/>
            <person name="Hamlin N."/>
            <person name="Harris D.E."/>
            <person name="Horsnell T."/>
            <person name="Hunt S."/>
            <person name="Jagels K."/>
            <person name="Jones M."/>
            <person name="Lye G."/>
            <person name="Moule S."/>
            <person name="Odell C."/>
            <person name="Pearson D."/>
            <person name="Rajandream M.A."/>
            <person name="Rice P."/>
            <person name="Rowley N."/>
            <person name="Skelton J."/>
            <person name="Smith V."/>
            <person name="Walsh S.V."/>
            <person name="Whitehead S."/>
            <person name="Barrell B.G."/>
        </authorList>
    </citation>
    <scope>NUCLEOTIDE SEQUENCE [LARGE SCALE GENOMIC DNA]</scope>
    <source>
        <strain>ATCC 204508 / S288c</strain>
    </source>
</reference>
<reference key="4">
    <citation type="journal article" date="2014" name="G3 (Bethesda)">
        <title>The reference genome sequence of Saccharomyces cerevisiae: Then and now.</title>
        <authorList>
            <person name="Engel S.R."/>
            <person name="Dietrich F.S."/>
            <person name="Fisk D.G."/>
            <person name="Binkley G."/>
            <person name="Balakrishnan R."/>
            <person name="Costanzo M.C."/>
            <person name="Dwight S.S."/>
            <person name="Hitz B.C."/>
            <person name="Karra K."/>
            <person name="Nash R.S."/>
            <person name="Weng S."/>
            <person name="Wong E.D."/>
            <person name="Lloyd P."/>
            <person name="Skrzypek M.S."/>
            <person name="Miyasato S.R."/>
            <person name="Simison M."/>
            <person name="Cherry J.M."/>
        </authorList>
    </citation>
    <scope>GENOME REANNOTATION</scope>
    <source>
        <strain>ATCC 204508 / S288c</strain>
    </source>
</reference>
<reference key="5">
    <citation type="journal article" date="1985" name="Mol. Cell. Biol.">
        <title>Identification of the ureidoglycolate hydrolase gene in the DAL gene cluster of Saccharomyces cerevisiae.</title>
        <authorList>
            <person name="Yoo H.S."/>
            <person name="Genbauffe F.S."/>
            <person name="Cooper T.G."/>
        </authorList>
    </citation>
    <scope>IDENTIFICATION</scope>
    <scope>INDUCTION</scope>
</reference>
<reference key="6">
    <citation type="journal article" date="2016" name="J. Cell Sci.">
        <title>Pex9p is a new yeast peroxisomal import receptor for PTS1-containing proteins.</title>
        <authorList>
            <person name="Effelsberg D."/>
            <person name="Cruz-Zaragoza L.D."/>
            <person name="Schliebs W."/>
            <person name="Erdmann R."/>
        </authorList>
    </citation>
    <scope>INTERACTION WITH PEX9</scope>
    <scope>SUBCELLULAR LOCATION</scope>
</reference>
<comment type="function">
    <text evidence="5">Allantoin metabolism-specific malate synthase involved in the recycling the glyoxylate generated during allantoin degradation by the ureidoglycollate (UG) hydrolase reaction.</text>
</comment>
<comment type="catalytic activity">
    <reaction evidence="1">
        <text>glyoxylate + acetyl-CoA + H2O = (S)-malate + CoA + H(+)</text>
        <dbReference type="Rhea" id="RHEA:18181"/>
        <dbReference type="ChEBI" id="CHEBI:15377"/>
        <dbReference type="ChEBI" id="CHEBI:15378"/>
        <dbReference type="ChEBI" id="CHEBI:15589"/>
        <dbReference type="ChEBI" id="CHEBI:36655"/>
        <dbReference type="ChEBI" id="CHEBI:57287"/>
        <dbReference type="ChEBI" id="CHEBI:57288"/>
        <dbReference type="EC" id="2.3.3.9"/>
    </reaction>
</comment>
<comment type="subunit">
    <text evidence="3">Interacts with PEX9.</text>
</comment>
<comment type="subcellular location">
    <subcellularLocation>
        <location evidence="3">Peroxisome matrix</location>
    </subcellularLocation>
    <text evidence="3">Imported in peroxisome via recognition by the peroxisomal targeting signal receptor PEX9.</text>
</comment>
<comment type="induction">
    <text evidence="4 5">Expression is insensitive to carbon catabolite repression, but highly sensitive to nitrogen catabolite repression (PubMed:8462696). Its expression is induced by allophanate or oxalurate (PubMed:3915539).</text>
</comment>
<comment type="disruption phenotype">
    <text evidence="2">Diminishes the ureidoglycollate hydrolase activity by 3 to 4 fold.</text>
</comment>
<comment type="similarity">
    <text evidence="4">Belongs to the malate synthase family.</text>
</comment>
<name>MLS2_YEAST</name>
<accession>P21826</accession>
<accession>D6VVW2</accession>
<sequence length="554" mass="62794">MVKISLDNTALYADIDTTPQFEPSKTTVADILTKDALEFIVLLHRTFNSTRKQLLANRSNLQSKLDSGEYRFDFLPETEQIRNDPTWQGAIPAPGLINRSSEITGPPLRNMLVNALNAEVTTYMTDFEDSSSPTWENMIYGQVNLYDAIRNQIDFKTPRKEYRLKDDISRLPTLIVRPRGWHMVEKHLYIDDEPISASIFDFGLYFYHNAKELVKIGKGPYFYLPKMEHHMEVKLWNDIFCVAQDFIGMPRGTIRATVLIETLPAAFQMEEIIYQIREHSSGLNCGRWDYIFSTIKKLRNLPEHVLPNRDLVTMTSPFMDAYVKRLINTCHRRGVHAMGGMAAQIPIKDDPKANEAAMNKVRNDKIREMKNGHDGSWVAHPALAPICNEVFSNMGTANQIYFVPDVHVTSSDLLNTKIQDAQVTTEGIRVNLDIGLQYMEAWLRGSGCVPINHLMEDAATAEVSRCQLYQWVKHGVVLSDTGDKVTPELTAKILNEETAKLASASPLGEKNKFALAAKYFLPEVTGKIFSDFLTTLLYDEIIKPSAKPVDLSKL</sequence>
<proteinExistence type="evidence at protein level"/>